<feature type="transit peptide" description="Mitochondrion" evidence="1">
    <location>
        <begin position="1"/>
        <end position="31"/>
    </location>
</feature>
<feature type="chain" id="PRO_0000402904" description="Translation factor guf1, mitochondrial">
    <location>
        <begin position="32"/>
        <end position="644"/>
    </location>
</feature>
<feature type="domain" description="tr-type G">
    <location>
        <begin position="51"/>
        <end position="232"/>
    </location>
</feature>
<feature type="binding site" evidence="1">
    <location>
        <begin position="60"/>
        <end position="67"/>
    </location>
    <ligand>
        <name>GTP</name>
        <dbReference type="ChEBI" id="CHEBI:37565"/>
    </ligand>
</feature>
<feature type="binding site" evidence="1">
    <location>
        <begin position="125"/>
        <end position="129"/>
    </location>
    <ligand>
        <name>GTP</name>
        <dbReference type="ChEBI" id="CHEBI:37565"/>
    </ligand>
</feature>
<feature type="binding site" evidence="1">
    <location>
        <begin position="179"/>
        <end position="182"/>
    </location>
    <ligand>
        <name>GTP</name>
        <dbReference type="ChEBI" id="CHEBI:37565"/>
    </ligand>
</feature>
<organism>
    <name type="scientific">Schizosaccharomyces japonicus (strain yFS275 / FY16936)</name>
    <name type="common">Fission yeast</name>
    <dbReference type="NCBI Taxonomy" id="402676"/>
    <lineage>
        <taxon>Eukaryota</taxon>
        <taxon>Fungi</taxon>
        <taxon>Dikarya</taxon>
        <taxon>Ascomycota</taxon>
        <taxon>Taphrinomycotina</taxon>
        <taxon>Schizosaccharomycetes</taxon>
        <taxon>Schizosaccharomycetales</taxon>
        <taxon>Schizosaccharomycetaceae</taxon>
        <taxon>Schizosaccharomyces</taxon>
    </lineage>
</organism>
<sequence>MTLRRFSYTFQARILRGLQARPVFVLPSRSHSTKARPVVDIADAAEHIPTVNIRNWAIISHIDHGKSTLSDRILELTGVIEKSSGKQRVLDKLSVEQRRGITVKAQTCSMIYEYNDEQYLLNLIDTPGHVDFSSEVTHSLAACEGCILLVDATRGIQAQTVSNFYLAFARNLVIIPVLNKIDLPTAEPEKVLAQLEEVFELDRKEALLVSSKTGKNVPELIDAIIQRVPHPICDENASLKCVLIDSWFNTHRGVIGLVRILDGKLVAGAAIYSVNTHRKYVVNEVGFMHPNPVEAQVLLAGQVGYVNWNMKNSAEAILGDTFTQVGHVVKAMPGFEKQQPKVYVNAFPLVRSDYDSLSDSIDRLALNDRSIFVEKDTSDTLGIGWRLGFLGSLHLSVFLDRLKDEYKHEVLVTAPTVPYRITWKDGMTSMVSNPSNFPDARTAYAQVEEPMALVTLVFPREYVGPVMNLCESCRGTQQKCSFLSTARCVLEYLLPMSRLMDGFFDQLKSCTHGYGSLEYEDAGFAPSDIVKLSYLVNGMPIDALCTILHRSSVLRTARASLQRLKSLIPRQLYEVALQAMCEKHIIARETISAARKNVTAKCYGGDVTRKMKLLKNQREGKKRMKQFGNVSIDQGVFYDFLMKS</sequence>
<dbReference type="EC" id="3.6.5.-"/>
<dbReference type="EMBL" id="KE651167">
    <property type="protein sequence ID" value="EEB09170.2"/>
    <property type="status" value="ALT_SEQ"/>
    <property type="molecule type" value="Genomic_DNA"/>
</dbReference>
<dbReference type="RefSeq" id="XP_002175463.2">
    <property type="nucleotide sequence ID" value="XM_002175427.2"/>
</dbReference>
<dbReference type="SMR" id="B6K6L6"/>
<dbReference type="STRING" id="402676.B6K6L6"/>
<dbReference type="GeneID" id="7050905"/>
<dbReference type="JaponicusDB" id="SJAG_04351">
    <property type="gene designation" value="guf1"/>
</dbReference>
<dbReference type="eggNOG" id="KOG0462">
    <property type="taxonomic scope" value="Eukaryota"/>
</dbReference>
<dbReference type="OrthoDB" id="1074at2759"/>
<dbReference type="Proteomes" id="UP000001744">
    <property type="component" value="Unassembled WGS sequence"/>
</dbReference>
<dbReference type="GO" id="GO:0005743">
    <property type="term" value="C:mitochondrial inner membrane"/>
    <property type="evidence" value="ECO:0007669"/>
    <property type="project" value="UniProtKB-SubCell"/>
</dbReference>
<dbReference type="GO" id="GO:0005759">
    <property type="term" value="C:mitochondrial matrix"/>
    <property type="evidence" value="ECO:0007669"/>
    <property type="project" value="UniProtKB-UniRule"/>
</dbReference>
<dbReference type="GO" id="GO:0005739">
    <property type="term" value="C:mitochondrion"/>
    <property type="evidence" value="ECO:0000318"/>
    <property type="project" value="GO_Central"/>
</dbReference>
<dbReference type="GO" id="GO:0005525">
    <property type="term" value="F:GTP binding"/>
    <property type="evidence" value="ECO:0007669"/>
    <property type="project" value="UniProtKB-UniRule"/>
</dbReference>
<dbReference type="GO" id="GO:0003924">
    <property type="term" value="F:GTPase activity"/>
    <property type="evidence" value="ECO:0007669"/>
    <property type="project" value="UniProtKB-UniRule"/>
</dbReference>
<dbReference type="GO" id="GO:0097177">
    <property type="term" value="F:mitochondrial ribosome binding"/>
    <property type="evidence" value="ECO:0000318"/>
    <property type="project" value="GO_Central"/>
</dbReference>
<dbReference type="GO" id="GO:0045727">
    <property type="term" value="P:positive regulation of translation"/>
    <property type="evidence" value="ECO:0000318"/>
    <property type="project" value="GO_Central"/>
</dbReference>
<dbReference type="GO" id="GO:0006412">
    <property type="term" value="P:translation"/>
    <property type="evidence" value="ECO:0007669"/>
    <property type="project" value="UniProtKB-KW"/>
</dbReference>
<dbReference type="CDD" id="cd03699">
    <property type="entry name" value="EF4_II"/>
    <property type="match status" value="1"/>
</dbReference>
<dbReference type="CDD" id="cd01890">
    <property type="entry name" value="LepA"/>
    <property type="match status" value="1"/>
</dbReference>
<dbReference type="CDD" id="cd03709">
    <property type="entry name" value="lepA_C"/>
    <property type="match status" value="1"/>
</dbReference>
<dbReference type="FunFam" id="3.40.50.300:FF:000078">
    <property type="entry name" value="Elongation factor 4"/>
    <property type="match status" value="1"/>
</dbReference>
<dbReference type="FunFam" id="2.40.30.10:FF:000015">
    <property type="entry name" value="Translation factor GUF1, mitochondrial"/>
    <property type="match status" value="1"/>
</dbReference>
<dbReference type="FunFam" id="3.30.70.240:FF:000007">
    <property type="entry name" value="Translation factor GUF1, mitochondrial"/>
    <property type="match status" value="1"/>
</dbReference>
<dbReference type="FunFam" id="3.30.70.2570:FF:000001">
    <property type="entry name" value="Translation factor GUF1, mitochondrial"/>
    <property type="match status" value="1"/>
</dbReference>
<dbReference type="FunFam" id="3.30.70.870:FF:000004">
    <property type="entry name" value="Translation factor GUF1, mitochondrial"/>
    <property type="match status" value="1"/>
</dbReference>
<dbReference type="Gene3D" id="3.30.70.240">
    <property type="match status" value="1"/>
</dbReference>
<dbReference type="Gene3D" id="3.30.70.2570">
    <property type="entry name" value="Elongation factor 4, C-terminal domain"/>
    <property type="match status" value="1"/>
</dbReference>
<dbReference type="Gene3D" id="3.30.70.870">
    <property type="entry name" value="Elongation Factor G (Translational Gtpase), domain 3"/>
    <property type="match status" value="1"/>
</dbReference>
<dbReference type="Gene3D" id="3.40.50.300">
    <property type="entry name" value="P-loop containing nucleotide triphosphate hydrolases"/>
    <property type="match status" value="1"/>
</dbReference>
<dbReference type="Gene3D" id="2.40.30.10">
    <property type="entry name" value="Translation factors"/>
    <property type="match status" value="1"/>
</dbReference>
<dbReference type="HAMAP" id="MF_00071">
    <property type="entry name" value="LepA"/>
    <property type="match status" value="1"/>
</dbReference>
<dbReference type="InterPro" id="IPR006297">
    <property type="entry name" value="EF-4"/>
</dbReference>
<dbReference type="InterPro" id="IPR035647">
    <property type="entry name" value="EFG_III/V"/>
</dbReference>
<dbReference type="InterPro" id="IPR000640">
    <property type="entry name" value="EFG_V-like"/>
</dbReference>
<dbReference type="InterPro" id="IPR031157">
    <property type="entry name" value="G_TR_CS"/>
</dbReference>
<dbReference type="InterPro" id="IPR038363">
    <property type="entry name" value="LepA_C_sf"/>
</dbReference>
<dbReference type="InterPro" id="IPR013842">
    <property type="entry name" value="LepA_CTD"/>
</dbReference>
<dbReference type="InterPro" id="IPR035654">
    <property type="entry name" value="LepA_IV"/>
</dbReference>
<dbReference type="InterPro" id="IPR027417">
    <property type="entry name" value="P-loop_NTPase"/>
</dbReference>
<dbReference type="InterPro" id="IPR005225">
    <property type="entry name" value="Small_GTP-bd"/>
</dbReference>
<dbReference type="InterPro" id="IPR000795">
    <property type="entry name" value="T_Tr_GTP-bd_dom"/>
</dbReference>
<dbReference type="InterPro" id="IPR009000">
    <property type="entry name" value="Transl_B-barrel_sf"/>
</dbReference>
<dbReference type="NCBIfam" id="TIGR01393">
    <property type="entry name" value="lepA"/>
    <property type="match status" value="1"/>
</dbReference>
<dbReference type="NCBIfam" id="TIGR00231">
    <property type="entry name" value="small_GTP"/>
    <property type="match status" value="1"/>
</dbReference>
<dbReference type="PANTHER" id="PTHR43512:SF7">
    <property type="entry name" value="TRANSLATION FACTOR GUF1, MITOCHONDRIAL"/>
    <property type="match status" value="1"/>
</dbReference>
<dbReference type="PANTHER" id="PTHR43512">
    <property type="entry name" value="TRANSLATION FACTOR GUF1-RELATED"/>
    <property type="match status" value="1"/>
</dbReference>
<dbReference type="Pfam" id="PF00679">
    <property type="entry name" value="EFG_C"/>
    <property type="match status" value="1"/>
</dbReference>
<dbReference type="Pfam" id="PF00009">
    <property type="entry name" value="GTP_EFTU"/>
    <property type="match status" value="1"/>
</dbReference>
<dbReference type="Pfam" id="PF06421">
    <property type="entry name" value="LepA_C"/>
    <property type="match status" value="1"/>
</dbReference>
<dbReference type="PRINTS" id="PR00315">
    <property type="entry name" value="ELONGATNFCT"/>
</dbReference>
<dbReference type="SUPFAM" id="SSF54980">
    <property type="entry name" value="EF-G C-terminal domain-like"/>
    <property type="match status" value="2"/>
</dbReference>
<dbReference type="SUPFAM" id="SSF52540">
    <property type="entry name" value="P-loop containing nucleoside triphosphate hydrolases"/>
    <property type="match status" value="1"/>
</dbReference>
<dbReference type="SUPFAM" id="SSF50447">
    <property type="entry name" value="Translation proteins"/>
    <property type="match status" value="1"/>
</dbReference>
<dbReference type="PROSITE" id="PS00301">
    <property type="entry name" value="G_TR_1"/>
    <property type="match status" value="1"/>
</dbReference>
<dbReference type="PROSITE" id="PS51722">
    <property type="entry name" value="G_TR_2"/>
    <property type="match status" value="1"/>
</dbReference>
<protein>
    <recommendedName>
        <fullName evidence="1">Translation factor guf1, mitochondrial</fullName>
        <ecNumber>3.6.5.-</ecNumber>
    </recommendedName>
    <alternativeName>
        <fullName evidence="1">Elongation factor 4 homolog</fullName>
        <shortName evidence="1">EF-4</shortName>
    </alternativeName>
    <alternativeName>
        <fullName evidence="1">GTPase guf1</fullName>
    </alternativeName>
    <alternativeName>
        <fullName evidence="1">Ribosomal back-translocase</fullName>
    </alternativeName>
</protein>
<proteinExistence type="inferred from homology"/>
<gene>
    <name type="primary">guf1</name>
    <name type="ORF">SJAG_04351</name>
</gene>
<evidence type="ECO:0000255" key="1">
    <source>
        <dbReference type="HAMAP-Rule" id="MF_03137"/>
    </source>
</evidence>
<evidence type="ECO:0000305" key="2"/>
<name>GUF1_SCHJY</name>
<accession>B6K6L6</accession>
<reference key="1">
    <citation type="journal article" date="2011" name="Science">
        <title>Comparative functional genomics of the fission yeasts.</title>
        <authorList>
            <person name="Rhind N."/>
            <person name="Chen Z."/>
            <person name="Yassour M."/>
            <person name="Thompson D.A."/>
            <person name="Haas B.J."/>
            <person name="Habib N."/>
            <person name="Wapinski I."/>
            <person name="Roy S."/>
            <person name="Lin M.F."/>
            <person name="Heiman D.I."/>
            <person name="Young S.K."/>
            <person name="Furuya K."/>
            <person name="Guo Y."/>
            <person name="Pidoux A."/>
            <person name="Chen H.M."/>
            <person name="Robbertse B."/>
            <person name="Goldberg J.M."/>
            <person name="Aoki K."/>
            <person name="Bayne E.H."/>
            <person name="Berlin A.M."/>
            <person name="Desjardins C.A."/>
            <person name="Dobbs E."/>
            <person name="Dukaj L."/>
            <person name="Fan L."/>
            <person name="FitzGerald M.G."/>
            <person name="French C."/>
            <person name="Gujja S."/>
            <person name="Hansen K."/>
            <person name="Keifenheim D."/>
            <person name="Levin J.Z."/>
            <person name="Mosher R.A."/>
            <person name="Mueller C.A."/>
            <person name="Pfiffner J."/>
            <person name="Priest M."/>
            <person name="Russ C."/>
            <person name="Smialowska A."/>
            <person name="Swoboda P."/>
            <person name="Sykes S.M."/>
            <person name="Vaughn M."/>
            <person name="Vengrova S."/>
            <person name="Yoder R."/>
            <person name="Zeng Q."/>
            <person name="Allshire R."/>
            <person name="Baulcombe D."/>
            <person name="Birren B.W."/>
            <person name="Brown W."/>
            <person name="Ekwall K."/>
            <person name="Kellis M."/>
            <person name="Leatherwood J."/>
            <person name="Levin H."/>
            <person name="Margalit H."/>
            <person name="Martienssen R."/>
            <person name="Nieduszynski C.A."/>
            <person name="Spatafora J.W."/>
            <person name="Friedman N."/>
            <person name="Dalgaard J.Z."/>
            <person name="Baumann P."/>
            <person name="Niki H."/>
            <person name="Regev A."/>
            <person name="Nusbaum C."/>
        </authorList>
    </citation>
    <scope>NUCLEOTIDE SEQUENCE [LARGE SCALE GENOMIC DNA]</scope>
    <source>
        <strain>yFS275 / FY16936</strain>
    </source>
</reference>
<comment type="function">
    <text evidence="1">Promotes mitochondrial protein synthesis. May act as a fidelity factor of the translation reaction, by catalyzing a one-codon backward translocation of tRNAs on improperly translocated ribosomes. Binds to mitochondrial ribosomes in a GTP-dependent manner.</text>
</comment>
<comment type="catalytic activity">
    <reaction evidence="1">
        <text>GTP + H2O = GDP + phosphate + H(+)</text>
        <dbReference type="Rhea" id="RHEA:19669"/>
        <dbReference type="ChEBI" id="CHEBI:15377"/>
        <dbReference type="ChEBI" id="CHEBI:15378"/>
        <dbReference type="ChEBI" id="CHEBI:37565"/>
        <dbReference type="ChEBI" id="CHEBI:43474"/>
        <dbReference type="ChEBI" id="CHEBI:58189"/>
    </reaction>
</comment>
<comment type="subcellular location">
    <subcellularLocation>
        <location evidence="1">Mitochondrion inner membrane</location>
        <topology evidence="1">Peripheral membrane protein</topology>
        <orientation evidence="1">Matrix side</orientation>
    </subcellularLocation>
</comment>
<comment type="similarity">
    <text evidence="2">Belongs to the TRAFAC class translation factor GTPase superfamily. Classic translation factor GTPase family. LepA subfamily.</text>
</comment>
<comment type="sequence caution" evidence="2">
    <conflict type="erroneous gene model prediction">
        <sequence resource="EMBL-CDS" id="EEB09170"/>
    </conflict>
</comment>
<keyword id="KW-0342">GTP-binding</keyword>
<keyword id="KW-0378">Hydrolase</keyword>
<keyword id="KW-0472">Membrane</keyword>
<keyword id="KW-0496">Mitochondrion</keyword>
<keyword id="KW-0999">Mitochondrion inner membrane</keyword>
<keyword id="KW-0547">Nucleotide-binding</keyword>
<keyword id="KW-0648">Protein biosynthesis</keyword>
<keyword id="KW-1185">Reference proteome</keyword>
<keyword id="KW-0809">Transit peptide</keyword>